<feature type="chain" id="PRO_0000197202" description="Metallothionein-2">
    <location>
        <begin position="1"/>
        <end position="61"/>
    </location>
</feature>
<feature type="region of interest" description="Beta">
    <location>
        <begin position="1"/>
        <end position="29"/>
    </location>
</feature>
<feature type="region of interest" description="Alpha">
    <location>
        <begin position="30"/>
        <end position="61"/>
    </location>
</feature>
<feature type="binding site" evidence="1">
    <location>
        <position position="5"/>
    </location>
    <ligand>
        <name>a divalent metal cation</name>
        <dbReference type="ChEBI" id="CHEBI:60240"/>
        <label>1</label>
        <note>in cluster B</note>
    </ligand>
</feature>
<feature type="binding site" evidence="1">
    <location>
        <position position="7"/>
    </location>
    <ligand>
        <name>a divalent metal cation</name>
        <dbReference type="ChEBI" id="CHEBI:60240"/>
        <label>1</label>
        <note>in cluster B</note>
    </ligand>
</feature>
<feature type="binding site" evidence="1">
    <location>
        <position position="7"/>
    </location>
    <ligand>
        <name>a divalent metal cation</name>
        <dbReference type="ChEBI" id="CHEBI:60240"/>
        <label>2</label>
        <note>in cluster B</note>
    </ligand>
</feature>
<feature type="binding site" evidence="1">
    <location>
        <position position="13"/>
    </location>
    <ligand>
        <name>a divalent metal cation</name>
        <dbReference type="ChEBI" id="CHEBI:60240"/>
        <label>2</label>
        <note>in cluster B</note>
    </ligand>
</feature>
<feature type="binding site" evidence="1">
    <location>
        <position position="15"/>
    </location>
    <ligand>
        <name>a divalent metal cation</name>
        <dbReference type="ChEBI" id="CHEBI:60240"/>
        <label>2</label>
        <note>in cluster B</note>
    </ligand>
</feature>
<feature type="binding site" evidence="1">
    <location>
        <position position="15"/>
    </location>
    <ligand>
        <name>a divalent metal cation</name>
        <dbReference type="ChEBI" id="CHEBI:60240"/>
        <label>3</label>
        <note>in cluster B</note>
    </ligand>
</feature>
<feature type="binding site" evidence="1">
    <location>
        <position position="19"/>
    </location>
    <ligand>
        <name>a divalent metal cation</name>
        <dbReference type="ChEBI" id="CHEBI:60240"/>
        <label>3</label>
        <note>in cluster B</note>
    </ligand>
</feature>
<feature type="binding site" evidence="1">
    <location>
        <position position="21"/>
    </location>
    <ligand>
        <name>a divalent metal cation</name>
        <dbReference type="ChEBI" id="CHEBI:60240"/>
        <label>1</label>
        <note>in cluster B</note>
    </ligand>
</feature>
<feature type="binding site" evidence="1">
    <location>
        <position position="24"/>
    </location>
    <ligand>
        <name>a divalent metal cation</name>
        <dbReference type="ChEBI" id="CHEBI:60240"/>
        <label>1</label>
        <note>in cluster B</note>
    </ligand>
</feature>
<feature type="binding site" evidence="1">
    <location>
        <position position="24"/>
    </location>
    <ligand>
        <name>a divalent metal cation</name>
        <dbReference type="ChEBI" id="CHEBI:60240"/>
        <label>3</label>
        <note>in cluster B</note>
    </ligand>
</feature>
<feature type="binding site" evidence="1">
    <location>
        <position position="26"/>
    </location>
    <ligand>
        <name>a divalent metal cation</name>
        <dbReference type="ChEBI" id="CHEBI:60240"/>
        <label>2</label>
        <note>in cluster B</note>
    </ligand>
</feature>
<feature type="binding site" evidence="1">
    <location>
        <position position="29"/>
    </location>
    <ligand>
        <name>a divalent metal cation</name>
        <dbReference type="ChEBI" id="CHEBI:60240"/>
        <label>3</label>
        <note>in cluster B</note>
    </ligand>
</feature>
<feature type="binding site" evidence="1">
    <location>
        <position position="33"/>
    </location>
    <ligand>
        <name>a divalent metal cation</name>
        <dbReference type="ChEBI" id="CHEBI:60240"/>
        <label>4</label>
        <note>in cluster A</note>
    </ligand>
</feature>
<feature type="binding site" evidence="1">
    <location>
        <position position="34"/>
    </location>
    <ligand>
        <name>a divalent metal cation</name>
        <dbReference type="ChEBI" id="CHEBI:60240"/>
        <label>4</label>
        <note>in cluster A</note>
    </ligand>
</feature>
<feature type="binding site" evidence="1">
    <location>
        <position position="34"/>
    </location>
    <ligand>
        <name>a divalent metal cation</name>
        <dbReference type="ChEBI" id="CHEBI:60240"/>
        <label>5</label>
        <note>in cluster A</note>
    </ligand>
</feature>
<feature type="binding site" evidence="1">
    <location>
        <position position="36"/>
    </location>
    <ligand>
        <name>a divalent metal cation</name>
        <dbReference type="ChEBI" id="CHEBI:60240"/>
        <label>5</label>
        <note>in cluster A</note>
    </ligand>
</feature>
<feature type="binding site" evidence="1">
    <location>
        <position position="37"/>
    </location>
    <ligand>
        <name>a divalent metal cation</name>
        <dbReference type="ChEBI" id="CHEBI:60240"/>
        <label>5</label>
        <note>in cluster A</note>
    </ligand>
</feature>
<feature type="binding site" evidence="1">
    <location>
        <position position="37"/>
    </location>
    <ligand>
        <name>a divalent metal cation</name>
        <dbReference type="ChEBI" id="CHEBI:60240"/>
        <label>6</label>
        <note>in cluster A</note>
    </ligand>
</feature>
<feature type="binding site" evidence="1">
    <location>
        <position position="41"/>
    </location>
    <ligand>
        <name>a divalent metal cation</name>
        <dbReference type="ChEBI" id="CHEBI:60240"/>
        <label>6</label>
        <note>in cluster A</note>
    </ligand>
</feature>
<feature type="binding site" evidence="1">
    <location>
        <position position="44"/>
    </location>
    <ligand>
        <name>a divalent metal cation</name>
        <dbReference type="ChEBI" id="CHEBI:60240"/>
        <label>4</label>
        <note>in cluster A</note>
    </ligand>
</feature>
<feature type="binding site" evidence="1">
    <location>
        <position position="44"/>
    </location>
    <ligand>
        <name>a divalent metal cation</name>
        <dbReference type="ChEBI" id="CHEBI:60240"/>
        <label>6</label>
        <note>in cluster A</note>
    </ligand>
</feature>
<feature type="binding site" evidence="1">
    <location>
        <position position="48"/>
    </location>
    <ligand>
        <name>a divalent metal cation</name>
        <dbReference type="ChEBI" id="CHEBI:60240"/>
        <label>4</label>
        <note>in cluster A</note>
    </ligand>
</feature>
<feature type="binding site" evidence="1">
    <location>
        <position position="50"/>
    </location>
    <ligand>
        <name>a divalent metal cation</name>
        <dbReference type="ChEBI" id="CHEBI:60240"/>
        <label>5</label>
        <note>in cluster A</note>
    </ligand>
</feature>
<feature type="binding site" evidence="1">
    <location>
        <position position="50"/>
    </location>
    <ligand>
        <name>a divalent metal cation</name>
        <dbReference type="ChEBI" id="CHEBI:60240"/>
        <label>7</label>
        <note>in cluster A</note>
    </ligand>
</feature>
<feature type="binding site" evidence="1">
    <location>
        <position position="57"/>
    </location>
    <ligand>
        <name>a divalent metal cation</name>
        <dbReference type="ChEBI" id="CHEBI:60240"/>
        <label>7</label>
        <note>in cluster A</note>
    </ligand>
</feature>
<feature type="binding site" evidence="1">
    <location>
        <position position="59"/>
    </location>
    <ligand>
        <name>a divalent metal cation</name>
        <dbReference type="ChEBI" id="CHEBI:60240"/>
        <label>7</label>
        <note>in cluster A</note>
    </ligand>
</feature>
<feature type="binding site" evidence="1">
    <location>
        <position position="60"/>
    </location>
    <ligand>
        <name>a divalent metal cation</name>
        <dbReference type="ChEBI" id="CHEBI:60240"/>
        <label>6</label>
        <note>in cluster A</note>
    </ligand>
</feature>
<feature type="binding site" evidence="1">
    <location>
        <position position="60"/>
    </location>
    <ligand>
        <name>a divalent metal cation</name>
        <dbReference type="ChEBI" id="CHEBI:60240"/>
        <label>7</label>
        <note>in cluster A</note>
    </ligand>
</feature>
<feature type="modified residue" description="N-acetylmethionine" evidence="2">
    <location>
        <position position="1"/>
    </location>
</feature>
<feature type="modified residue" description="Phosphoserine" evidence="1">
    <location>
        <position position="58"/>
    </location>
</feature>
<evidence type="ECO:0000250" key="1">
    <source>
        <dbReference type="UniProtKB" id="P02795"/>
    </source>
</evidence>
<evidence type="ECO:0000250" key="2">
    <source>
        <dbReference type="UniProtKB" id="P68301"/>
    </source>
</evidence>
<evidence type="ECO:0000305" key="3"/>
<proteinExistence type="inferred from homology"/>
<protein>
    <recommendedName>
        <fullName>Metallothionein-2</fullName>
        <shortName>MT-2</shortName>
    </recommendedName>
    <alternativeName>
        <fullName>Metallothionein-II</fullName>
        <shortName>MT-II</shortName>
    </alternativeName>
</protein>
<accession>P68041</accession>
<accession>P02799</accession>
<comment type="function">
    <text>Metallothioneins have a high content of cysteine residues that bind various heavy metals; these proteins are transcriptionally regulated by both heavy metals and glucocorticoids.</text>
</comment>
<comment type="domain">
    <text>Class I metallothioneins contain 2 metal-binding domains: four divalent ions are chelated within cluster A of the alpha domain and are coordinated via cysteinyl thiolate bridges to 11 cysteine ligands. Cluster B, the corresponding region within the beta domain, can ligate three divalent ions to 9 cysteines.</text>
</comment>
<comment type="similarity">
    <text evidence="3">Belongs to the metallothionein superfamily. Type 1 family.</text>
</comment>
<name>MT2_CRILO</name>
<organism>
    <name type="scientific">Cricetulus longicaudatus</name>
    <name type="common">Long-tailed dwarf hamster</name>
    <dbReference type="NCBI Taxonomy" id="10030"/>
    <lineage>
        <taxon>Eukaryota</taxon>
        <taxon>Metazoa</taxon>
        <taxon>Chordata</taxon>
        <taxon>Craniata</taxon>
        <taxon>Vertebrata</taxon>
        <taxon>Euteleostomi</taxon>
        <taxon>Mammalia</taxon>
        <taxon>Eutheria</taxon>
        <taxon>Euarchontoglires</taxon>
        <taxon>Glires</taxon>
        <taxon>Rodentia</taxon>
        <taxon>Myomorpha</taxon>
        <taxon>Muroidea</taxon>
        <taxon>Cricetidae</taxon>
        <taxon>Cricetinae</taxon>
        <taxon>Cricetulus</taxon>
    </lineage>
</organism>
<gene>
    <name type="primary">MT2</name>
</gene>
<reference key="1">
    <citation type="journal article" date="1985" name="DNA">
        <title>Construction and characterization of a library of metallothionein coding sequence mutants.</title>
        <authorList>
            <person name="Pine R."/>
            <person name="Cismowski M."/>
            <person name="Liu S.W."/>
            <person name="Huang P.C."/>
        </authorList>
    </citation>
    <scope>NUCLEOTIDE SEQUENCE [GENOMIC DNA]</scope>
</reference>
<keyword id="KW-0007">Acetylation</keyword>
<keyword id="KW-0479">Metal-binding</keyword>
<keyword id="KW-0480">Metal-thiolate cluster</keyword>
<keyword id="KW-0597">Phosphoprotein</keyword>
<sequence>MDPNCSCATDGSCSCAGSCKCKECKCTTCKKSCCSCCPVGCAKCSQGCVCKEASDKCSCCA</sequence>
<dbReference type="EMBL" id="M11265">
    <property type="protein sequence ID" value="AAA36998.1"/>
    <property type="molecule type" value="Genomic_DNA"/>
</dbReference>
<dbReference type="PIR" id="I48116">
    <property type="entry name" value="I48116"/>
</dbReference>
<dbReference type="SMR" id="P68041"/>
<dbReference type="GO" id="GO:0005737">
    <property type="term" value="C:cytoplasm"/>
    <property type="evidence" value="ECO:0000250"/>
    <property type="project" value="UniProtKB"/>
</dbReference>
<dbReference type="GO" id="GO:0005634">
    <property type="term" value="C:nucleus"/>
    <property type="evidence" value="ECO:0000250"/>
    <property type="project" value="UniProtKB"/>
</dbReference>
<dbReference type="GO" id="GO:0008270">
    <property type="term" value="F:zinc ion binding"/>
    <property type="evidence" value="ECO:0000250"/>
    <property type="project" value="UniProtKB"/>
</dbReference>
<dbReference type="GO" id="GO:0071276">
    <property type="term" value="P:cellular response to cadmium ion"/>
    <property type="evidence" value="ECO:0007669"/>
    <property type="project" value="TreeGrafter"/>
</dbReference>
<dbReference type="GO" id="GO:0071280">
    <property type="term" value="P:cellular response to copper ion"/>
    <property type="evidence" value="ECO:0007669"/>
    <property type="project" value="TreeGrafter"/>
</dbReference>
<dbReference type="GO" id="GO:0071294">
    <property type="term" value="P:cellular response to zinc ion"/>
    <property type="evidence" value="ECO:0000250"/>
    <property type="project" value="UniProtKB"/>
</dbReference>
<dbReference type="GO" id="GO:0010273">
    <property type="term" value="P:detoxification of copper ion"/>
    <property type="evidence" value="ECO:0007669"/>
    <property type="project" value="TreeGrafter"/>
</dbReference>
<dbReference type="GO" id="GO:0006882">
    <property type="term" value="P:intracellular zinc ion homeostasis"/>
    <property type="evidence" value="ECO:0007669"/>
    <property type="project" value="TreeGrafter"/>
</dbReference>
<dbReference type="GO" id="GO:0045926">
    <property type="term" value="P:negative regulation of growth"/>
    <property type="evidence" value="ECO:0000250"/>
    <property type="project" value="UniProtKB"/>
</dbReference>
<dbReference type="FunFam" id="4.10.10.10:FF:000001">
    <property type="entry name" value="Metallothionein"/>
    <property type="match status" value="1"/>
</dbReference>
<dbReference type="Gene3D" id="4.10.10.10">
    <property type="entry name" value="Metallothionein Isoform II"/>
    <property type="match status" value="1"/>
</dbReference>
<dbReference type="InterPro" id="IPR017854">
    <property type="entry name" value="Metalthion_dom_sf"/>
</dbReference>
<dbReference type="InterPro" id="IPR023587">
    <property type="entry name" value="Metalthion_dom_sf_vert"/>
</dbReference>
<dbReference type="InterPro" id="IPR000006">
    <property type="entry name" value="Metalthion_vert"/>
</dbReference>
<dbReference type="InterPro" id="IPR018064">
    <property type="entry name" value="Metalthion_vert_metal_BS"/>
</dbReference>
<dbReference type="PANTHER" id="PTHR23299">
    <property type="entry name" value="METALLOTHIONEIN"/>
    <property type="match status" value="1"/>
</dbReference>
<dbReference type="PANTHER" id="PTHR23299:SF22">
    <property type="entry name" value="METALLOTHIONEIN-1G"/>
    <property type="match status" value="1"/>
</dbReference>
<dbReference type="Pfam" id="PF00131">
    <property type="entry name" value="Metallothio"/>
    <property type="match status" value="1"/>
</dbReference>
<dbReference type="PRINTS" id="PR00860">
    <property type="entry name" value="MTVERTEBRATE"/>
</dbReference>
<dbReference type="SUPFAM" id="SSF57868">
    <property type="entry name" value="Metallothionein"/>
    <property type="match status" value="1"/>
</dbReference>
<dbReference type="PROSITE" id="PS00203">
    <property type="entry name" value="METALLOTHIONEIN_VRT"/>
    <property type="match status" value="1"/>
</dbReference>